<name>VPS33_YEAST</name>
<organism>
    <name type="scientific">Saccharomyces cerevisiae (strain ATCC 204508 / S288c)</name>
    <name type="common">Baker's yeast</name>
    <dbReference type="NCBI Taxonomy" id="559292"/>
    <lineage>
        <taxon>Eukaryota</taxon>
        <taxon>Fungi</taxon>
        <taxon>Dikarya</taxon>
        <taxon>Ascomycota</taxon>
        <taxon>Saccharomycotina</taxon>
        <taxon>Saccharomycetes</taxon>
        <taxon>Saccharomycetales</taxon>
        <taxon>Saccharomycetaceae</taxon>
        <taxon>Saccharomyces</taxon>
    </lineage>
</organism>
<evidence type="ECO:0000269" key="1">
    <source>
    </source>
</evidence>
<evidence type="ECO:0000269" key="2">
    <source>
    </source>
</evidence>
<evidence type="ECO:0000269" key="3">
    <source>
    </source>
</evidence>
<evidence type="ECO:0000305" key="4"/>
<evidence type="ECO:0007744" key="5">
    <source>
    </source>
</evidence>
<sequence length="691" mass="79271">MNRFWNTKKFSLTNADGLCATLNEISQNDEVLVVQPSVLPVLNSLLTFQDLTQSTPVRKITLLDDQLSDDLPSALGSVPQMDLIFLIDVRTSLRLPPQLLDAAQKHNLSSLHIIYCRWKPSFQNTLEDTEQWQKDGFDLNSKKTHFPNVIESQLKELSNEYTLYPWDLLPFPQIDENVLLTHSLYNMENVNMYYPNLRSLQSATESILVDDMVNSLQSLIFETNSIITNVVSIGNLSKRCSHLLKKRIDEHQTENDLFIKGTLYGERTNCGLEMDLIILERNTDPITPLLTQLTYAGILDDLYEFNSGIKIKEKDMNFNYKEDKIWNDLKFLNFGSIGPQLNKLAKELQTQYDTRHKAESVHEIKEFVDSLGSLQQRQAFLKNHTTLSSDVLKVVETEEYGSFNKILELELEILMGNTLNNDIEDIILELQYQYEVDQKKILRLICLLSLCKNSLREKDYEYLRTFMIDSWGIEKCFQLESLAELGFFTSKTGKTDLHITTSKSTRLQKEYRYISQWFNTVPIEDEHAADKITNENDDFSEATFAYSGVVPLTMRLVQMLYDRSILFHNYSSQQPFILSREPRVSQTEDLIEQLYGDSHAIEESIWVPGTITKKINASIKSNNRRSIDGSNGTFHAAEDIALVVFLGGVTMGEIAIMKHLQKILGKKGINKRFIIIADGLINGTRIMNSIS</sequence>
<dbReference type="EMBL" id="M34474">
    <property type="protein sequence ID" value="AAA35052.1"/>
    <property type="molecule type" value="mRNA"/>
</dbReference>
<dbReference type="EMBL" id="M34638">
    <property type="protein sequence ID" value="AAA35217.1"/>
    <property type="molecule type" value="Genomic_DNA"/>
</dbReference>
<dbReference type="EMBL" id="U19729">
    <property type="protein sequence ID" value="AAB82354.1"/>
    <property type="molecule type" value="Genomic_DNA"/>
</dbReference>
<dbReference type="EMBL" id="BK006945">
    <property type="protein sequence ID" value="DAA09697.1"/>
    <property type="molecule type" value="Genomic_DNA"/>
</dbReference>
<dbReference type="PIR" id="A34708">
    <property type="entry name" value="A34708"/>
</dbReference>
<dbReference type="RefSeq" id="NP_013500.3">
    <property type="nucleotide sequence ID" value="NM_001182284.3"/>
</dbReference>
<dbReference type="PDB" id="7ZU0">
    <property type="method" value="EM"/>
    <property type="resolution" value="4.40 A"/>
    <property type="chains" value="D=1-691"/>
</dbReference>
<dbReference type="PDB" id="8QX8">
    <property type="method" value="EM"/>
    <property type="resolution" value="4.60 A"/>
    <property type="chains" value="D=1-691"/>
</dbReference>
<dbReference type="PDBsum" id="7ZU0"/>
<dbReference type="PDBsum" id="8QX8"/>
<dbReference type="EMDB" id="EMD-14964"/>
<dbReference type="EMDB" id="EMD-18701"/>
<dbReference type="EMDB" id="EMD-2280"/>
<dbReference type="SMR" id="P20795"/>
<dbReference type="BioGRID" id="31655">
    <property type="interactions" value="91"/>
</dbReference>
<dbReference type="ComplexPortal" id="CPX-1625">
    <property type="entry name" value="HOPS tethering complex"/>
</dbReference>
<dbReference type="ComplexPortal" id="CPX-1626">
    <property type="entry name" value="CORVET tethering complex"/>
</dbReference>
<dbReference type="DIP" id="DIP-5910N"/>
<dbReference type="FunCoup" id="P20795">
    <property type="interactions" value="849"/>
</dbReference>
<dbReference type="IntAct" id="P20795">
    <property type="interactions" value="22"/>
</dbReference>
<dbReference type="MINT" id="P20795"/>
<dbReference type="STRING" id="4932.YLR396C"/>
<dbReference type="iPTMnet" id="P20795"/>
<dbReference type="PaxDb" id="4932-YLR396C"/>
<dbReference type="PeptideAtlas" id="P20795"/>
<dbReference type="EnsemblFungi" id="YLR396C_mRNA">
    <property type="protein sequence ID" value="YLR396C"/>
    <property type="gene ID" value="YLR396C"/>
</dbReference>
<dbReference type="GeneID" id="851112"/>
<dbReference type="KEGG" id="sce:YLR396C"/>
<dbReference type="AGR" id="SGD:S000004388"/>
<dbReference type="SGD" id="S000004388">
    <property type="gene designation" value="VPS33"/>
</dbReference>
<dbReference type="VEuPathDB" id="FungiDB:YLR396C"/>
<dbReference type="eggNOG" id="KOG1302">
    <property type="taxonomic scope" value="Eukaryota"/>
</dbReference>
<dbReference type="GeneTree" id="ENSGT00940000156813"/>
<dbReference type="HOGENOM" id="CLU_398604_0_0_1"/>
<dbReference type="InParanoid" id="P20795"/>
<dbReference type="OMA" id="EFHIFFV"/>
<dbReference type="OrthoDB" id="10262287at2759"/>
<dbReference type="BioCyc" id="YEAST:G3O-32460-MONOMER"/>
<dbReference type="BioGRID-ORCS" id="851112">
    <property type="hits" value="1 hit in 10 CRISPR screens"/>
</dbReference>
<dbReference type="PRO" id="PR:P20795"/>
<dbReference type="Proteomes" id="UP000002311">
    <property type="component" value="Chromosome XII"/>
</dbReference>
<dbReference type="RNAct" id="P20795">
    <property type="molecule type" value="protein"/>
</dbReference>
<dbReference type="GO" id="GO:0033263">
    <property type="term" value="C:CORVET complex"/>
    <property type="evidence" value="ECO:0000314"/>
    <property type="project" value="SGD"/>
</dbReference>
<dbReference type="GO" id="GO:0005829">
    <property type="term" value="C:cytosol"/>
    <property type="evidence" value="ECO:0000314"/>
    <property type="project" value="SGD"/>
</dbReference>
<dbReference type="GO" id="GO:0031901">
    <property type="term" value="C:early endosome membrane"/>
    <property type="evidence" value="ECO:0000314"/>
    <property type="project" value="ComplexPortal"/>
</dbReference>
<dbReference type="GO" id="GO:0000324">
    <property type="term" value="C:fungal-type vacuole"/>
    <property type="evidence" value="ECO:0000314"/>
    <property type="project" value="SGD"/>
</dbReference>
<dbReference type="GO" id="GO:0000329">
    <property type="term" value="C:fungal-type vacuole membrane"/>
    <property type="evidence" value="ECO:0000314"/>
    <property type="project" value="SGD"/>
</dbReference>
<dbReference type="GO" id="GO:0030897">
    <property type="term" value="C:HOPS complex"/>
    <property type="evidence" value="ECO:0000353"/>
    <property type="project" value="ComplexPortal"/>
</dbReference>
<dbReference type="GO" id="GO:0005524">
    <property type="term" value="F:ATP binding"/>
    <property type="evidence" value="ECO:0000314"/>
    <property type="project" value="SGD"/>
</dbReference>
<dbReference type="GO" id="GO:0006897">
    <property type="term" value="P:endocytosis"/>
    <property type="evidence" value="ECO:0000315"/>
    <property type="project" value="SGD"/>
</dbReference>
<dbReference type="GO" id="GO:0006896">
    <property type="term" value="P:Golgi to vacuole transport"/>
    <property type="evidence" value="ECO:0000315"/>
    <property type="project" value="SGD"/>
</dbReference>
<dbReference type="GO" id="GO:0006886">
    <property type="term" value="P:intracellular protein transport"/>
    <property type="evidence" value="ECO:0000318"/>
    <property type="project" value="GO_Central"/>
</dbReference>
<dbReference type="GO" id="GO:0034727">
    <property type="term" value="P:piecemeal microautophagy of the nucleus"/>
    <property type="evidence" value="ECO:0000315"/>
    <property type="project" value="SGD"/>
</dbReference>
<dbReference type="GO" id="GO:0006623">
    <property type="term" value="P:protein targeting to vacuole"/>
    <property type="evidence" value="ECO:0000315"/>
    <property type="project" value="SGD"/>
</dbReference>
<dbReference type="GO" id="GO:0035542">
    <property type="term" value="P:regulation of SNARE complex assembly"/>
    <property type="evidence" value="ECO:0000314"/>
    <property type="project" value="SGD"/>
</dbReference>
<dbReference type="GO" id="GO:0032889">
    <property type="term" value="P:regulation of vacuole fusion, non-autophagic"/>
    <property type="evidence" value="ECO:0000314"/>
    <property type="project" value="ComplexPortal"/>
</dbReference>
<dbReference type="GO" id="GO:0042144">
    <property type="term" value="P:vacuole fusion, non-autophagic"/>
    <property type="evidence" value="ECO:0000315"/>
    <property type="project" value="SGD"/>
</dbReference>
<dbReference type="GO" id="GO:0007033">
    <property type="term" value="P:vacuole organization"/>
    <property type="evidence" value="ECO:0000315"/>
    <property type="project" value="SGD"/>
</dbReference>
<dbReference type="GO" id="GO:0048278">
    <property type="term" value="P:vesicle docking"/>
    <property type="evidence" value="ECO:0000316"/>
    <property type="project" value="SGD"/>
</dbReference>
<dbReference type="GO" id="GO:0051469">
    <property type="term" value="P:vesicle fusion with vacuole"/>
    <property type="evidence" value="ECO:0000316"/>
    <property type="project" value="SGD"/>
</dbReference>
<dbReference type="GO" id="GO:0099022">
    <property type="term" value="P:vesicle tethering"/>
    <property type="evidence" value="ECO:0000314"/>
    <property type="project" value="ComplexPortal"/>
</dbReference>
<dbReference type="GO" id="GO:0016192">
    <property type="term" value="P:vesicle-mediated transport"/>
    <property type="evidence" value="ECO:0000318"/>
    <property type="project" value="GO_Central"/>
</dbReference>
<dbReference type="FunFam" id="1.25.40.850:FF:000003">
    <property type="entry name" value="Vacuolar protein sorting 33"/>
    <property type="match status" value="1"/>
</dbReference>
<dbReference type="FunFam" id="3.90.830.10:FF:000012">
    <property type="entry name" value="Vacuolar protein sorting 33"/>
    <property type="match status" value="1"/>
</dbReference>
<dbReference type="Gene3D" id="1.25.40.850">
    <property type="match status" value="1"/>
</dbReference>
<dbReference type="Gene3D" id="3.40.50.1910">
    <property type="match status" value="1"/>
</dbReference>
<dbReference type="Gene3D" id="3.90.830.10">
    <property type="entry name" value="Syntaxin Binding Protein 1, Chain A, domain 2"/>
    <property type="match status" value="1"/>
</dbReference>
<dbReference type="InterPro" id="IPR043127">
    <property type="entry name" value="Sec-1-like_dom3a"/>
</dbReference>
<dbReference type="InterPro" id="IPR001619">
    <property type="entry name" value="Sec1-like"/>
</dbReference>
<dbReference type="InterPro" id="IPR027482">
    <property type="entry name" value="Sec1-like_dom2"/>
</dbReference>
<dbReference type="InterPro" id="IPR036045">
    <property type="entry name" value="Sec1-like_sf"/>
</dbReference>
<dbReference type="InterPro" id="IPR043155">
    <property type="entry name" value="VPS33_dom3b"/>
</dbReference>
<dbReference type="PANTHER" id="PTHR11679">
    <property type="entry name" value="VESICLE PROTEIN SORTING-ASSOCIATED"/>
    <property type="match status" value="1"/>
</dbReference>
<dbReference type="Pfam" id="PF00995">
    <property type="entry name" value="Sec1"/>
    <property type="match status" value="1"/>
</dbReference>
<dbReference type="SUPFAM" id="SSF56815">
    <property type="entry name" value="Sec1/munc18-like (SM) proteins"/>
    <property type="match status" value="1"/>
</dbReference>
<comment type="function">
    <text evidence="3">Essential for vacuolar biogenesis, maturation and function. Involved in the sorting of vacuolar proteins from the Golgi apparatus and their targeting to the vacuole. Acts as a component of the HOPS complex that acts during the docking stage of vacuole fusion. HOPS is an effector for the vacuolar Rab GTPase YPT7 and is required for vacuolar SNARE complex assembly. It remains bound to SNARE complexes after vacuole fusion.</text>
</comment>
<comment type="subunit">
    <text evidence="1 3">Component of the HOPS complex which is composed of PEP5, VPS16, PEP3, VPS33, VPS39 and VPS41. HOPS associates with phosphoinositides and the PX domain of VAM7. Interacts with IVY1 and VAM7.</text>
</comment>
<comment type="interaction">
    <interactant intactId="EBI-20395">
        <id>P20795</id>
    </interactant>
    <interactant intactId="EBI-35255">
        <id>Q04934</id>
        <label>IVY1</label>
    </interactant>
    <organismsDiffer>false</organismsDiffer>
    <experiments>3</experiments>
</comment>
<comment type="interaction">
    <interactant intactId="EBI-20395">
        <id>P20795</id>
    </interactant>
    <interactant intactId="EBI-13130">
        <id>P27801</id>
        <label>PEP3</label>
    </interactant>
    <organismsDiffer>false</organismsDiffer>
    <experiments>9</experiments>
</comment>
<comment type="interaction">
    <interactant intactId="EBI-20395">
        <id>P20795</id>
    </interactant>
    <interactant intactId="EBI-6450">
        <id>P12868</id>
        <label>PEP5</label>
    </interactant>
    <organismsDiffer>false</organismsDiffer>
    <experiments>6</experiments>
</comment>
<comment type="interaction">
    <interactant intactId="EBI-20395">
        <id>P20795</id>
    </interactant>
    <interactant intactId="EBI-20227">
        <id>Q12241</id>
        <label>VAM3</label>
    </interactant>
    <organismsDiffer>false</organismsDiffer>
    <experiments>12</experiments>
</comment>
<comment type="interaction">
    <interactant intactId="EBI-20395">
        <id>P20795</id>
    </interactant>
    <interactant intactId="EBI-20422">
        <id>Q07468</id>
        <label>VAM6</label>
    </interactant>
    <organismsDiffer>false</organismsDiffer>
    <experiments>7</experiments>
</comment>
<comment type="interaction">
    <interactant intactId="EBI-20395">
        <id>P20795</id>
    </interactant>
    <interactant intactId="EBI-20232">
        <id>P32912</id>
        <label>VAM7</label>
    </interactant>
    <organismsDiffer>false</organismsDiffer>
    <experiments>4</experiments>
</comment>
<comment type="interaction">
    <interactant intactId="EBI-20395">
        <id>P20795</id>
    </interactant>
    <interactant intactId="EBI-20355">
        <id>Q03308</id>
        <label>VPS16</label>
    </interactant>
    <organismsDiffer>false</organismsDiffer>
    <experiments>6</experiments>
</comment>
<comment type="interaction">
    <interactant intactId="EBI-20395">
        <id>P20795</id>
    </interactant>
    <interactant intactId="EBI-20432">
        <id>P38959</id>
        <label>VPS41</label>
    </interactant>
    <organismsDiffer>false</organismsDiffer>
    <experiments>5</experiments>
</comment>
<comment type="subcellular location">
    <subcellularLocation>
        <location>Vacuole</location>
    </subcellularLocation>
</comment>
<comment type="miscellaneous">
    <text evidence="2">Present with 830 molecules/cell in log phase SD medium.</text>
</comment>
<comment type="similarity">
    <text evidence="4">Belongs to the STXBP/unc-18/SEC1 family.</text>
</comment>
<keyword id="KW-0002">3D-structure</keyword>
<keyword id="KW-0597">Phosphoprotein</keyword>
<keyword id="KW-0653">Protein transport</keyword>
<keyword id="KW-1185">Reference proteome</keyword>
<keyword id="KW-0813">Transport</keyword>
<keyword id="KW-0926">Vacuole</keyword>
<feature type="chain" id="PRO_0000206311" description="Vacuolar protein sorting-associated protein 33">
    <location>
        <begin position="1"/>
        <end position="691"/>
    </location>
</feature>
<feature type="modified residue" description="Phosphoserine" evidence="5">
    <location>
        <position position="626"/>
    </location>
</feature>
<gene>
    <name type="primary">VPS33</name>
    <name type="synonym">SLP1</name>
    <name type="synonym">VAM5</name>
    <name type="ordered locus">YLR396C</name>
    <name type="ORF">L8084.15</name>
</gene>
<reference key="1">
    <citation type="journal article" date="1990" name="Mol. Cell. Biol.">
        <title>The SLP1 gene of Saccharomyces cerevisiae is essential for vacuolar morphogenesis and function.</title>
        <authorList>
            <person name="Wada Y."/>
            <person name="Kitamoto K."/>
            <person name="Kanbe T."/>
            <person name="Tanaka K."/>
            <person name="Anraku Y."/>
        </authorList>
    </citation>
    <scope>NUCLEOTIDE SEQUENCE [MRNA]</scope>
</reference>
<reference key="2">
    <citation type="journal article" date="1990" name="Mol. Cell. Biol.">
        <title>Characterization of yeast Vps33p, a protein required for vacuolar protein sorting and vacuole biogenesis.</title>
        <authorList>
            <person name="Banta L.M."/>
            <person name="Vida T.A."/>
            <person name="Herman P.K."/>
            <person name="Emr S.D."/>
        </authorList>
    </citation>
    <scope>NUCLEOTIDE SEQUENCE [GENOMIC DNA]</scope>
</reference>
<reference key="3">
    <citation type="journal article" date="1997" name="Nature">
        <title>The nucleotide sequence of Saccharomyces cerevisiae chromosome XII.</title>
        <authorList>
            <person name="Johnston M."/>
            <person name="Hillier L.W."/>
            <person name="Riles L."/>
            <person name="Albermann K."/>
            <person name="Andre B."/>
            <person name="Ansorge W."/>
            <person name="Benes V."/>
            <person name="Brueckner M."/>
            <person name="Delius H."/>
            <person name="Dubois E."/>
            <person name="Duesterhoeft A."/>
            <person name="Entian K.-D."/>
            <person name="Floeth M."/>
            <person name="Goffeau A."/>
            <person name="Hebling U."/>
            <person name="Heumann K."/>
            <person name="Heuss-Neitzel D."/>
            <person name="Hilbert H."/>
            <person name="Hilger F."/>
            <person name="Kleine K."/>
            <person name="Koetter P."/>
            <person name="Louis E.J."/>
            <person name="Messenguy F."/>
            <person name="Mewes H.-W."/>
            <person name="Miosga T."/>
            <person name="Moestl D."/>
            <person name="Mueller-Auer S."/>
            <person name="Nentwich U."/>
            <person name="Obermaier B."/>
            <person name="Piravandi E."/>
            <person name="Pohl T.M."/>
            <person name="Portetelle D."/>
            <person name="Purnelle B."/>
            <person name="Rechmann S."/>
            <person name="Rieger M."/>
            <person name="Rinke M."/>
            <person name="Rose M."/>
            <person name="Scharfe M."/>
            <person name="Scherens B."/>
            <person name="Scholler P."/>
            <person name="Schwager C."/>
            <person name="Schwarz S."/>
            <person name="Underwood A.P."/>
            <person name="Urrestarazu L.A."/>
            <person name="Vandenbol M."/>
            <person name="Verhasselt P."/>
            <person name="Vierendeels F."/>
            <person name="Voet M."/>
            <person name="Volckaert G."/>
            <person name="Voss H."/>
            <person name="Wambutt R."/>
            <person name="Wedler E."/>
            <person name="Wedler H."/>
            <person name="Zimmermann F.K."/>
            <person name="Zollner A."/>
            <person name="Hani J."/>
            <person name="Hoheisel J.D."/>
        </authorList>
    </citation>
    <scope>NUCLEOTIDE SEQUENCE [LARGE SCALE GENOMIC DNA]</scope>
    <source>
        <strain>ATCC 204508 / S288c</strain>
    </source>
</reference>
<reference key="4">
    <citation type="journal article" date="2014" name="G3 (Bethesda)">
        <title>The reference genome sequence of Saccharomyces cerevisiae: Then and now.</title>
        <authorList>
            <person name="Engel S.R."/>
            <person name="Dietrich F.S."/>
            <person name="Fisk D.G."/>
            <person name="Binkley G."/>
            <person name="Balakrishnan R."/>
            <person name="Costanzo M.C."/>
            <person name="Dwight S.S."/>
            <person name="Hitz B.C."/>
            <person name="Karra K."/>
            <person name="Nash R.S."/>
            <person name="Weng S."/>
            <person name="Wong E.D."/>
            <person name="Lloyd P."/>
            <person name="Skrzypek M.S."/>
            <person name="Miyasato S.R."/>
            <person name="Simison M."/>
            <person name="Cherry J.M."/>
        </authorList>
    </citation>
    <scope>GENOME REANNOTATION</scope>
    <source>
        <strain>ATCC 204508 / S288c</strain>
    </source>
</reference>
<reference key="5">
    <citation type="journal article" date="2002" name="Eur. J. Cell Biol.">
        <title>A novel phospholipid-binding protein from the yeast Saccharomyces cerevisiae with dual binding specificities for the transport GTPase Ypt7p and the Sec1-related Vps33p.</title>
        <authorList>
            <person name="Lazar T."/>
            <person name="Scheglmann D."/>
            <person name="Gallwitz D."/>
        </authorList>
    </citation>
    <scope>INTERACTION WITH IVY1</scope>
</reference>
<reference key="6">
    <citation type="journal article" date="2003" name="Nature">
        <title>Global analysis of protein expression in yeast.</title>
        <authorList>
            <person name="Ghaemmaghami S."/>
            <person name="Huh W.-K."/>
            <person name="Bower K."/>
            <person name="Howson R.W."/>
            <person name="Belle A."/>
            <person name="Dephoure N."/>
            <person name="O'Shea E.K."/>
            <person name="Weissman J.S."/>
        </authorList>
    </citation>
    <scope>LEVEL OF PROTEIN EXPRESSION [LARGE SCALE ANALYSIS]</scope>
</reference>
<reference key="7">
    <citation type="journal article" date="2006" name="EMBO J.">
        <title>Purification of active HOPS complex reveals its affinities for phosphoinositides and the SNARE Vam7p.</title>
        <authorList>
            <person name="Stroupe C."/>
            <person name="Collins K.M."/>
            <person name="Fratti R.A."/>
            <person name="Wickner W."/>
        </authorList>
    </citation>
    <scope>IDENTIFICATION IN THE HOPS COMPLEX</scope>
    <scope>FUNCTION OF THE HOPS COMPLEX</scope>
    <scope>INTERACTION WITH VAM7</scope>
</reference>
<reference key="8">
    <citation type="journal article" date="2008" name="Mol. Cell. Proteomics">
        <title>A multidimensional chromatography technology for in-depth phosphoproteome analysis.</title>
        <authorList>
            <person name="Albuquerque C.P."/>
            <person name="Smolka M.B."/>
            <person name="Payne S.H."/>
            <person name="Bafna V."/>
            <person name="Eng J."/>
            <person name="Zhou H."/>
        </authorList>
    </citation>
    <scope>PHOSPHORYLATION [LARGE SCALE ANALYSIS] AT SER-626</scope>
    <scope>IDENTIFICATION BY MASS SPECTROMETRY [LARGE SCALE ANALYSIS]</scope>
</reference>
<accession>P20795</accession>
<accession>D6VZ31</accession>
<protein>
    <recommendedName>
        <fullName>Vacuolar protein sorting-associated protein 33</fullName>
    </recommendedName>
    <alternativeName>
        <fullName>Protein SLP1</fullName>
    </alternativeName>
    <alternativeName>
        <fullName>Vacuolar morphogenesis protein 5</fullName>
    </alternativeName>
</protein>
<proteinExistence type="evidence at protein level"/>